<sequence>MLKQVEIFTDGSCLGNPGPGGYGAILRYRGREKTFSAGYTRTTNNRMELMAAIVALEALKEHCEVILSTDSQYVRQGITQWIHNWKKRGWKTADKKPVKNVDLWQRLDAALGQHQIKWEWVKGHAGHPENERCDELARAAAMNPTLEDTGYQVEV</sequence>
<protein>
    <recommendedName>
        <fullName evidence="1">Ribonuclease H</fullName>
        <shortName evidence="1">RNase H</shortName>
        <ecNumber evidence="1">3.1.26.4</ecNumber>
    </recommendedName>
</protein>
<feature type="chain" id="PRO_1000202138" description="Ribonuclease H">
    <location>
        <begin position="1"/>
        <end position="155"/>
    </location>
</feature>
<feature type="domain" description="RNase H type-1" evidence="2">
    <location>
        <begin position="1"/>
        <end position="142"/>
    </location>
</feature>
<feature type="binding site" evidence="1">
    <location>
        <position position="10"/>
    </location>
    <ligand>
        <name>Mg(2+)</name>
        <dbReference type="ChEBI" id="CHEBI:18420"/>
        <label>1</label>
    </ligand>
</feature>
<feature type="binding site" evidence="1">
    <location>
        <position position="10"/>
    </location>
    <ligand>
        <name>Mg(2+)</name>
        <dbReference type="ChEBI" id="CHEBI:18420"/>
        <label>2</label>
    </ligand>
</feature>
<feature type="binding site" evidence="1">
    <location>
        <position position="48"/>
    </location>
    <ligand>
        <name>Mg(2+)</name>
        <dbReference type="ChEBI" id="CHEBI:18420"/>
        <label>1</label>
    </ligand>
</feature>
<feature type="binding site" evidence="1">
    <location>
        <position position="70"/>
    </location>
    <ligand>
        <name>Mg(2+)</name>
        <dbReference type="ChEBI" id="CHEBI:18420"/>
        <label>1</label>
    </ligand>
</feature>
<feature type="binding site" evidence="1">
    <location>
        <position position="134"/>
    </location>
    <ligand>
        <name>Mg(2+)</name>
        <dbReference type="ChEBI" id="CHEBI:18420"/>
        <label>2</label>
    </ligand>
</feature>
<name>RNH_ECOBW</name>
<dbReference type="EC" id="3.1.26.4" evidence="1"/>
<dbReference type="EMBL" id="CP001396">
    <property type="protein sequence ID" value="ACR65467.1"/>
    <property type="molecule type" value="Genomic_DNA"/>
</dbReference>
<dbReference type="RefSeq" id="WP_000917883.1">
    <property type="nucleotide sequence ID" value="NC_012759.1"/>
</dbReference>
<dbReference type="SMR" id="C4ZRV1"/>
<dbReference type="GeneID" id="93777209"/>
<dbReference type="KEGG" id="ebw:BWG_0201"/>
<dbReference type="HOGENOM" id="CLU_030894_6_0_6"/>
<dbReference type="GO" id="GO:0005737">
    <property type="term" value="C:cytoplasm"/>
    <property type="evidence" value="ECO:0007669"/>
    <property type="project" value="UniProtKB-SubCell"/>
</dbReference>
<dbReference type="GO" id="GO:0000287">
    <property type="term" value="F:magnesium ion binding"/>
    <property type="evidence" value="ECO:0007669"/>
    <property type="project" value="UniProtKB-UniRule"/>
</dbReference>
<dbReference type="GO" id="GO:0003676">
    <property type="term" value="F:nucleic acid binding"/>
    <property type="evidence" value="ECO:0007669"/>
    <property type="project" value="InterPro"/>
</dbReference>
<dbReference type="GO" id="GO:0004523">
    <property type="term" value="F:RNA-DNA hybrid ribonuclease activity"/>
    <property type="evidence" value="ECO:0007669"/>
    <property type="project" value="UniProtKB-UniRule"/>
</dbReference>
<dbReference type="GO" id="GO:0043137">
    <property type="term" value="P:DNA replication, removal of RNA primer"/>
    <property type="evidence" value="ECO:0007669"/>
    <property type="project" value="TreeGrafter"/>
</dbReference>
<dbReference type="CDD" id="cd09278">
    <property type="entry name" value="RNase_HI_prokaryote_like"/>
    <property type="match status" value="1"/>
</dbReference>
<dbReference type="FunFam" id="3.30.420.10:FF:000008">
    <property type="entry name" value="Ribonuclease H"/>
    <property type="match status" value="1"/>
</dbReference>
<dbReference type="Gene3D" id="3.30.420.10">
    <property type="entry name" value="Ribonuclease H-like superfamily/Ribonuclease H"/>
    <property type="match status" value="1"/>
</dbReference>
<dbReference type="HAMAP" id="MF_00042">
    <property type="entry name" value="RNase_H"/>
    <property type="match status" value="1"/>
</dbReference>
<dbReference type="InterPro" id="IPR050092">
    <property type="entry name" value="RNase_H"/>
</dbReference>
<dbReference type="InterPro" id="IPR012337">
    <property type="entry name" value="RNaseH-like_sf"/>
</dbReference>
<dbReference type="InterPro" id="IPR002156">
    <property type="entry name" value="RNaseH_domain"/>
</dbReference>
<dbReference type="InterPro" id="IPR036397">
    <property type="entry name" value="RNaseH_sf"/>
</dbReference>
<dbReference type="InterPro" id="IPR022892">
    <property type="entry name" value="RNaseHI"/>
</dbReference>
<dbReference type="NCBIfam" id="NF001236">
    <property type="entry name" value="PRK00203.1"/>
    <property type="match status" value="1"/>
</dbReference>
<dbReference type="PANTHER" id="PTHR10642">
    <property type="entry name" value="RIBONUCLEASE H1"/>
    <property type="match status" value="1"/>
</dbReference>
<dbReference type="PANTHER" id="PTHR10642:SF26">
    <property type="entry name" value="RIBONUCLEASE H1"/>
    <property type="match status" value="1"/>
</dbReference>
<dbReference type="Pfam" id="PF00075">
    <property type="entry name" value="RNase_H"/>
    <property type="match status" value="1"/>
</dbReference>
<dbReference type="SUPFAM" id="SSF53098">
    <property type="entry name" value="Ribonuclease H-like"/>
    <property type="match status" value="1"/>
</dbReference>
<dbReference type="PROSITE" id="PS50879">
    <property type="entry name" value="RNASE_H_1"/>
    <property type="match status" value="1"/>
</dbReference>
<comment type="function">
    <text evidence="1">Endonuclease that specifically degrades the RNA of RNA-DNA hybrids.</text>
</comment>
<comment type="catalytic activity">
    <reaction evidence="1">
        <text>Endonucleolytic cleavage to 5'-phosphomonoester.</text>
        <dbReference type="EC" id="3.1.26.4"/>
    </reaction>
</comment>
<comment type="cofactor">
    <cofactor evidence="1">
        <name>Mg(2+)</name>
        <dbReference type="ChEBI" id="CHEBI:18420"/>
    </cofactor>
    <text evidence="1">Binds 1 Mg(2+) ion per subunit. May bind a second metal ion at a regulatory site, or after substrate binding.</text>
</comment>
<comment type="subunit">
    <text evidence="1">Monomer.</text>
</comment>
<comment type="subcellular location">
    <subcellularLocation>
        <location evidence="1">Cytoplasm</location>
    </subcellularLocation>
</comment>
<comment type="similarity">
    <text evidence="1">Belongs to the RNase H family.</text>
</comment>
<evidence type="ECO:0000255" key="1">
    <source>
        <dbReference type="HAMAP-Rule" id="MF_00042"/>
    </source>
</evidence>
<evidence type="ECO:0000255" key="2">
    <source>
        <dbReference type="PROSITE-ProRule" id="PRU00408"/>
    </source>
</evidence>
<gene>
    <name evidence="1" type="primary">rnhA</name>
    <name type="ordered locus">BWG_0201</name>
</gene>
<keyword id="KW-0963">Cytoplasm</keyword>
<keyword id="KW-0255">Endonuclease</keyword>
<keyword id="KW-0378">Hydrolase</keyword>
<keyword id="KW-0460">Magnesium</keyword>
<keyword id="KW-0479">Metal-binding</keyword>
<keyword id="KW-0540">Nuclease</keyword>
<organism>
    <name type="scientific">Escherichia coli (strain K12 / MC4100 / BW2952)</name>
    <dbReference type="NCBI Taxonomy" id="595496"/>
    <lineage>
        <taxon>Bacteria</taxon>
        <taxon>Pseudomonadati</taxon>
        <taxon>Pseudomonadota</taxon>
        <taxon>Gammaproteobacteria</taxon>
        <taxon>Enterobacterales</taxon>
        <taxon>Enterobacteriaceae</taxon>
        <taxon>Escherichia</taxon>
    </lineage>
</organism>
<reference key="1">
    <citation type="journal article" date="2009" name="J. Bacteriol.">
        <title>Genomic sequencing reveals regulatory mutations and recombinational events in the widely used MC4100 lineage of Escherichia coli K-12.</title>
        <authorList>
            <person name="Ferenci T."/>
            <person name="Zhou Z."/>
            <person name="Betteridge T."/>
            <person name="Ren Y."/>
            <person name="Liu Y."/>
            <person name="Feng L."/>
            <person name="Reeves P.R."/>
            <person name="Wang L."/>
        </authorList>
    </citation>
    <scope>NUCLEOTIDE SEQUENCE [LARGE SCALE GENOMIC DNA]</scope>
    <source>
        <strain>K12 / MC4100 / BW2952</strain>
    </source>
</reference>
<accession>C4ZRV1</accession>
<proteinExistence type="inferred from homology"/>